<sequence>MHIIKRNGEPQPYMREKIIVAISAAFRSVQNPLAPEVPAIITDLAAEVERQLFEMNRAGVPVHVEKIQDFVEKTLTKYNHSDEVKSFILYRDDRTKKRIAREQIACCFTDSSVLGVLKEIQQDFPFPEYSLDALASKFLLFKKEVTDERRSMQLLIKAAVELTAQEAPQWELIAARLLMLDFSLALGTSLEKLNIHSFYEKITYLEEAGLYGVYIRTHYSRAEIEEAATYLECSRDKLFTYSSLDMILRRYVIRTRAHVPLETPQEMFLGIALHLAMNETQDRMQWVKRFYTVLSKLQVTVATPTLSNARKPFHQLSSCFVDTVPDSLDGIYRSIDNFSQVSKFGGGMGLYFGKVRAVGAPIRGFQGAAGGILRWIKLANDTAVAVDQLGVRQGSVAVYLDVWHKDIPEFLQLRTNNGDDRMKAHDVFPAVCYPDLFWKTVRDNLGASWYLMCPHEILTVKGYALEDFYAEEWEKRYWDCVKDARISKRTIPIKELVRLVLKSVVETGTPFAFYRDHANRANPNGHRGIIYCSNLCTEIAQNMSAINLVSVKITEVDGQKVVVQTTRPGDFVVCNLASLVLSNIDLSDDKELREVVRVAVRALDNVIDLTYYPVPYAQVTNAYYRAIGLGVSGYHHVLAQQGIDWESDEHLAFADRIFERINRAAIEASMTIAREKGAYGCFTGSDWCTGAYFRKRGYVSEDWQRLQREVATHGMRNGYLLAVAPTSSTSIIAGTTAGVDPIMKQYFLEEKKGMLMPRVAPSLSQKTCPLYKSAHAVEQRWSIRAAGLRQRHIDQAQSVNLYITTDFTLKQVLDLYVYAWEVGMKSLYYVRSQSLEIDLCGYCAS</sequence>
<feature type="chain" id="PRO_0000187223" description="Ribonucleoside-diphosphate reductase subunit alpha">
    <location>
        <begin position="1"/>
        <end position="845"/>
    </location>
</feature>
<feature type="domain" description="ATP-cone" evidence="2">
    <location>
        <begin position="1"/>
        <end position="98"/>
    </location>
</feature>
<feature type="active site" description="Proton acceptor" evidence="1">
    <location>
        <position position="534"/>
    </location>
</feature>
<feature type="active site" description="Cysteine radical intermediate" evidence="1">
    <location>
        <position position="536"/>
    </location>
</feature>
<feature type="active site" description="Proton acceptor" evidence="1">
    <location>
        <position position="538"/>
    </location>
</feature>
<feature type="binding site" evidence="1">
    <location>
        <position position="303"/>
    </location>
    <ligand>
        <name>substrate</name>
    </ligand>
</feature>
<feature type="binding site" evidence="1">
    <location>
        <begin position="318"/>
        <end position="319"/>
    </location>
    <ligand>
        <name>substrate</name>
    </ligand>
</feature>
<feature type="binding site" evidence="1">
    <location>
        <position position="347"/>
    </location>
    <ligand>
        <name>substrate</name>
    </ligand>
</feature>
<feature type="binding site" evidence="1">
    <location>
        <begin position="534"/>
        <end position="538"/>
    </location>
    <ligand>
        <name>substrate</name>
    </ligand>
</feature>
<feature type="binding site" evidence="1">
    <location>
        <begin position="725"/>
        <end position="729"/>
    </location>
    <ligand>
        <name>substrate</name>
    </ligand>
</feature>
<feature type="site" description="Important for hydrogen atom transfer" evidence="1">
    <location>
        <position position="319"/>
    </location>
</feature>
<feature type="site" description="Allosteric effector binding" evidence="1">
    <location>
        <position position="326"/>
    </location>
</feature>
<feature type="site" description="Allosteric effector binding" evidence="1">
    <location>
        <position position="356"/>
    </location>
</feature>
<feature type="site" description="Important for hydrogen atom transfer" evidence="1">
    <location>
        <position position="574"/>
    </location>
</feature>
<feature type="site" description="Important for electron transfer" evidence="1">
    <location>
        <position position="828"/>
    </location>
</feature>
<feature type="site" description="Important for electron transfer" evidence="1">
    <location>
        <position position="829"/>
    </location>
</feature>
<feature type="site" description="Interacts with thioredoxin/glutaredoxin" evidence="1">
    <location>
        <position position="840"/>
    </location>
</feature>
<feature type="site" description="Interacts with thioredoxin/glutaredoxin" evidence="1">
    <location>
        <position position="843"/>
    </location>
</feature>
<feature type="disulfide bond" description="Redox-active" evidence="1">
    <location>
        <begin position="319"/>
        <end position="574"/>
    </location>
</feature>
<dbReference type="EC" id="1.17.4.1"/>
<dbReference type="EMBL" id="AE000520">
    <property type="protein sequence ID" value="AAC65956.1"/>
    <property type="molecule type" value="Genomic_DNA"/>
</dbReference>
<dbReference type="PIR" id="B71255">
    <property type="entry name" value="B71255"/>
</dbReference>
<dbReference type="RefSeq" id="WP_010882452.1">
    <property type="nucleotide sequence ID" value="NC_021490.2"/>
</dbReference>
<dbReference type="SMR" id="O83972"/>
<dbReference type="IntAct" id="O83972">
    <property type="interactions" value="2"/>
</dbReference>
<dbReference type="STRING" id="243276.TP_1008"/>
<dbReference type="EnsemblBacteria" id="AAC65956">
    <property type="protein sequence ID" value="AAC65956"/>
    <property type="gene ID" value="TP_1008"/>
</dbReference>
<dbReference type="KEGG" id="tpa:TP_1008"/>
<dbReference type="KEGG" id="tpw:TPANIC_1008"/>
<dbReference type="eggNOG" id="COG0209">
    <property type="taxonomic scope" value="Bacteria"/>
</dbReference>
<dbReference type="HOGENOM" id="CLU_000404_3_0_12"/>
<dbReference type="OrthoDB" id="9762933at2"/>
<dbReference type="Proteomes" id="UP000000811">
    <property type="component" value="Chromosome"/>
</dbReference>
<dbReference type="GO" id="GO:0005971">
    <property type="term" value="C:ribonucleoside-diphosphate reductase complex"/>
    <property type="evidence" value="ECO:0007669"/>
    <property type="project" value="TreeGrafter"/>
</dbReference>
<dbReference type="GO" id="GO:0005524">
    <property type="term" value="F:ATP binding"/>
    <property type="evidence" value="ECO:0007669"/>
    <property type="project" value="UniProtKB-KW"/>
</dbReference>
<dbReference type="GO" id="GO:0004748">
    <property type="term" value="F:ribonucleoside-diphosphate reductase activity, thioredoxin disulfide as acceptor"/>
    <property type="evidence" value="ECO:0007669"/>
    <property type="project" value="UniProtKB-EC"/>
</dbReference>
<dbReference type="GO" id="GO:0009263">
    <property type="term" value="P:deoxyribonucleotide biosynthetic process"/>
    <property type="evidence" value="ECO:0007669"/>
    <property type="project" value="UniProtKB-KW"/>
</dbReference>
<dbReference type="CDD" id="cd01679">
    <property type="entry name" value="RNR_I"/>
    <property type="match status" value="1"/>
</dbReference>
<dbReference type="Gene3D" id="3.20.70.20">
    <property type="match status" value="1"/>
</dbReference>
<dbReference type="InterPro" id="IPR005144">
    <property type="entry name" value="ATP-cone_dom"/>
</dbReference>
<dbReference type="InterPro" id="IPR013346">
    <property type="entry name" value="NrdE_NrdA_C"/>
</dbReference>
<dbReference type="InterPro" id="IPR000788">
    <property type="entry name" value="RNR_lg_C"/>
</dbReference>
<dbReference type="InterPro" id="IPR013509">
    <property type="entry name" value="RNR_lsu_N"/>
</dbReference>
<dbReference type="InterPro" id="IPR008926">
    <property type="entry name" value="RNR_R1-su_N"/>
</dbReference>
<dbReference type="InterPro" id="IPR039718">
    <property type="entry name" value="Rrm1"/>
</dbReference>
<dbReference type="NCBIfam" id="TIGR02506">
    <property type="entry name" value="NrdE_NrdA"/>
    <property type="match status" value="1"/>
</dbReference>
<dbReference type="NCBIfam" id="NF009028">
    <property type="entry name" value="PRK12364.1"/>
    <property type="match status" value="1"/>
</dbReference>
<dbReference type="PANTHER" id="PTHR11573">
    <property type="entry name" value="RIBONUCLEOSIDE-DIPHOSPHATE REDUCTASE LARGE CHAIN"/>
    <property type="match status" value="1"/>
</dbReference>
<dbReference type="PANTHER" id="PTHR11573:SF6">
    <property type="entry name" value="RIBONUCLEOSIDE-DIPHOSPHATE REDUCTASE LARGE SUBUNIT"/>
    <property type="match status" value="1"/>
</dbReference>
<dbReference type="Pfam" id="PF03477">
    <property type="entry name" value="ATP-cone"/>
    <property type="match status" value="1"/>
</dbReference>
<dbReference type="Pfam" id="PF02867">
    <property type="entry name" value="Ribonuc_red_lgC"/>
    <property type="match status" value="1"/>
</dbReference>
<dbReference type="Pfam" id="PF00317">
    <property type="entry name" value="Ribonuc_red_lgN"/>
    <property type="match status" value="1"/>
</dbReference>
<dbReference type="PRINTS" id="PR01183">
    <property type="entry name" value="RIBORDTASEM1"/>
</dbReference>
<dbReference type="SUPFAM" id="SSF51998">
    <property type="entry name" value="PFL-like glycyl radical enzymes"/>
    <property type="match status" value="1"/>
</dbReference>
<dbReference type="SUPFAM" id="SSF48168">
    <property type="entry name" value="R1 subunit of ribonucleotide reductase, N-terminal domain"/>
    <property type="match status" value="1"/>
</dbReference>
<dbReference type="PROSITE" id="PS51161">
    <property type="entry name" value="ATP_CONE"/>
    <property type="match status" value="1"/>
</dbReference>
<dbReference type="PROSITE" id="PS00089">
    <property type="entry name" value="RIBORED_LARGE"/>
    <property type="match status" value="1"/>
</dbReference>
<comment type="function">
    <text evidence="1">Provides the precursors necessary for DNA synthesis. Catalyzes the biosynthesis of deoxyribonucleotides from the corresponding ribonucleotides (By similarity).</text>
</comment>
<comment type="catalytic activity">
    <reaction>
        <text>a 2'-deoxyribonucleoside 5'-diphosphate + [thioredoxin]-disulfide + H2O = a ribonucleoside 5'-diphosphate + [thioredoxin]-dithiol</text>
        <dbReference type="Rhea" id="RHEA:23252"/>
        <dbReference type="Rhea" id="RHEA-COMP:10698"/>
        <dbReference type="Rhea" id="RHEA-COMP:10700"/>
        <dbReference type="ChEBI" id="CHEBI:15377"/>
        <dbReference type="ChEBI" id="CHEBI:29950"/>
        <dbReference type="ChEBI" id="CHEBI:50058"/>
        <dbReference type="ChEBI" id="CHEBI:57930"/>
        <dbReference type="ChEBI" id="CHEBI:73316"/>
        <dbReference type="EC" id="1.17.4.1"/>
    </reaction>
</comment>
<comment type="activity regulation">
    <text evidence="1">Under complex allosteric control mediated by deoxynucleoside triphosphates and ATP binding. The type of nucleotide bound at the specificity site determines substrate preference. It seems probable that ATP makes the enzyme reduce CDP and UDP, dGTP favors ADP reduction and dTTP favors GDP reduction (By similarity).</text>
</comment>
<comment type="subunit">
    <text evidence="1">Tetramer of two alpha and two beta subunits.</text>
</comment>
<comment type="similarity">
    <text evidence="3">Belongs to the ribonucleoside diphosphate reductase large chain family.</text>
</comment>
<accession>O83972</accession>
<reference key="1">
    <citation type="journal article" date="1998" name="Science">
        <title>Complete genome sequence of Treponema pallidum, the syphilis spirochete.</title>
        <authorList>
            <person name="Fraser C.M."/>
            <person name="Norris S.J."/>
            <person name="Weinstock G.M."/>
            <person name="White O."/>
            <person name="Sutton G.G."/>
            <person name="Dodson R.J."/>
            <person name="Gwinn M.L."/>
            <person name="Hickey E.K."/>
            <person name="Clayton R.A."/>
            <person name="Ketchum K.A."/>
            <person name="Sodergren E."/>
            <person name="Hardham J.M."/>
            <person name="McLeod M.P."/>
            <person name="Salzberg S.L."/>
            <person name="Peterson J.D."/>
            <person name="Khalak H.G."/>
            <person name="Richardson D.L."/>
            <person name="Howell J.K."/>
            <person name="Chidambaram M."/>
            <person name="Utterback T.R."/>
            <person name="McDonald L.A."/>
            <person name="Artiach P."/>
            <person name="Bowman C."/>
            <person name="Cotton M.D."/>
            <person name="Fujii C."/>
            <person name="Garland S.A."/>
            <person name="Hatch B."/>
            <person name="Horst K."/>
            <person name="Roberts K.M."/>
            <person name="Sandusky M."/>
            <person name="Weidman J.F."/>
            <person name="Smith H.O."/>
            <person name="Venter J.C."/>
        </authorList>
    </citation>
    <scope>NUCLEOTIDE SEQUENCE [LARGE SCALE GENOMIC DNA]</scope>
    <source>
        <strain>Nichols</strain>
    </source>
</reference>
<gene>
    <name type="primary">nrdA</name>
    <name type="ordered locus">TP_1008</name>
</gene>
<keyword id="KW-0021">Allosteric enzyme</keyword>
<keyword id="KW-0067">ATP-binding</keyword>
<keyword id="KW-0215">Deoxyribonucleotide synthesis</keyword>
<keyword id="KW-1015">Disulfide bond</keyword>
<keyword id="KW-0547">Nucleotide-binding</keyword>
<keyword id="KW-0560">Oxidoreductase</keyword>
<keyword id="KW-1185">Reference proteome</keyword>
<name>RIR1_TREPA</name>
<organism>
    <name type="scientific">Treponema pallidum (strain Nichols)</name>
    <dbReference type="NCBI Taxonomy" id="243276"/>
    <lineage>
        <taxon>Bacteria</taxon>
        <taxon>Pseudomonadati</taxon>
        <taxon>Spirochaetota</taxon>
        <taxon>Spirochaetia</taxon>
        <taxon>Spirochaetales</taxon>
        <taxon>Treponemataceae</taxon>
        <taxon>Treponema</taxon>
    </lineage>
</organism>
<protein>
    <recommendedName>
        <fullName>Ribonucleoside-diphosphate reductase subunit alpha</fullName>
        <ecNumber>1.17.4.1</ecNumber>
    </recommendedName>
    <alternativeName>
        <fullName>Ribonucleotide reductase</fullName>
    </alternativeName>
</protein>
<evidence type="ECO:0000250" key="1"/>
<evidence type="ECO:0000255" key="2">
    <source>
        <dbReference type="PROSITE-ProRule" id="PRU00492"/>
    </source>
</evidence>
<evidence type="ECO:0000305" key="3"/>
<proteinExistence type="inferred from homology"/>